<feature type="chain" id="PRO_1000184254" description="Urease accessory protein UreD">
    <location>
        <begin position="1"/>
        <end position="273"/>
    </location>
</feature>
<name>URED_RHIR8</name>
<proteinExistence type="inferred from homology"/>
<protein>
    <recommendedName>
        <fullName evidence="1">Urease accessory protein UreD</fullName>
    </recommendedName>
</protein>
<reference key="1">
    <citation type="journal article" date="2009" name="J. Bacteriol.">
        <title>Genome sequences of three Agrobacterium biovars help elucidate the evolution of multichromosome genomes in bacteria.</title>
        <authorList>
            <person name="Slater S.C."/>
            <person name="Goldman B.S."/>
            <person name="Goodner B."/>
            <person name="Setubal J.C."/>
            <person name="Farrand S.K."/>
            <person name="Nester E.W."/>
            <person name="Burr T.J."/>
            <person name="Banta L."/>
            <person name="Dickerman A.W."/>
            <person name="Paulsen I."/>
            <person name="Otten L."/>
            <person name="Suen G."/>
            <person name="Welch R."/>
            <person name="Almeida N.F."/>
            <person name="Arnold F."/>
            <person name="Burton O.T."/>
            <person name="Du Z."/>
            <person name="Ewing A."/>
            <person name="Godsy E."/>
            <person name="Heisel S."/>
            <person name="Houmiel K.L."/>
            <person name="Jhaveri J."/>
            <person name="Lu J."/>
            <person name="Miller N.M."/>
            <person name="Norton S."/>
            <person name="Chen Q."/>
            <person name="Phoolcharoen W."/>
            <person name="Ohlin V."/>
            <person name="Ondrusek D."/>
            <person name="Pride N."/>
            <person name="Stricklin S.L."/>
            <person name="Sun J."/>
            <person name="Wheeler C."/>
            <person name="Wilson L."/>
            <person name="Zhu H."/>
            <person name="Wood D.W."/>
        </authorList>
    </citation>
    <scope>NUCLEOTIDE SEQUENCE [LARGE SCALE GENOMIC DNA]</scope>
    <source>
        <strain>K84 / ATCC BAA-868</strain>
    </source>
</reference>
<keyword id="KW-0143">Chaperone</keyword>
<keyword id="KW-0963">Cytoplasm</keyword>
<keyword id="KW-0996">Nickel insertion</keyword>
<comment type="function">
    <text evidence="1">Required for maturation of urease via the functional incorporation of the urease nickel metallocenter.</text>
</comment>
<comment type="subunit">
    <text evidence="1">UreD, UreF and UreG form a complex that acts as a GTP-hydrolysis-dependent molecular chaperone, activating the urease apoprotein by helping to assemble the nickel containing metallocenter of UreC. The UreE protein probably delivers the nickel.</text>
</comment>
<comment type="subcellular location">
    <subcellularLocation>
        <location evidence="1">Cytoplasm</location>
    </subcellularLocation>
</comment>
<comment type="similarity">
    <text evidence="1">Belongs to the UreD family.</text>
</comment>
<accession>B9J8M7</accession>
<sequence length="273" mass="29534">MTVAAASTRPQRARGRGHLAARALDGRTRLAELFQEGSAKIRLPATFDNSMEAVIINTAGGLTGGDRMDWSIVAGPGTRIDVTTQACEKIYKASASTAEVVTSIRAGAGARVDWLPQETILFDRASLSRRLDVDLDETAEFLAVEAILLGRKAMGEAMRQGLFRDRWRIRRAGRLIHAEELRLDGDVAALTAEHAVLSGQVAFTTLLYAGPLAETYLAQVRPLVEGHMGGASQWRDKLVVRLAASDGFALRKILIPVISALRNGAPVPKVWNL</sequence>
<dbReference type="EMBL" id="CP000628">
    <property type="protein sequence ID" value="ACM27415.1"/>
    <property type="molecule type" value="Genomic_DNA"/>
</dbReference>
<dbReference type="RefSeq" id="WP_012652110.1">
    <property type="nucleotide sequence ID" value="NC_011985.1"/>
</dbReference>
<dbReference type="SMR" id="B9J8M7"/>
<dbReference type="STRING" id="311403.Arad_3474"/>
<dbReference type="KEGG" id="ara:Arad_3474"/>
<dbReference type="eggNOG" id="COG0829">
    <property type="taxonomic scope" value="Bacteria"/>
</dbReference>
<dbReference type="HOGENOM" id="CLU_056339_2_0_5"/>
<dbReference type="Proteomes" id="UP000001600">
    <property type="component" value="Chromosome 1"/>
</dbReference>
<dbReference type="GO" id="GO:0005737">
    <property type="term" value="C:cytoplasm"/>
    <property type="evidence" value="ECO:0007669"/>
    <property type="project" value="UniProtKB-SubCell"/>
</dbReference>
<dbReference type="GO" id="GO:0016151">
    <property type="term" value="F:nickel cation binding"/>
    <property type="evidence" value="ECO:0007669"/>
    <property type="project" value="UniProtKB-UniRule"/>
</dbReference>
<dbReference type="HAMAP" id="MF_01384">
    <property type="entry name" value="UreD"/>
    <property type="match status" value="1"/>
</dbReference>
<dbReference type="InterPro" id="IPR002669">
    <property type="entry name" value="UreD"/>
</dbReference>
<dbReference type="PANTHER" id="PTHR33643">
    <property type="entry name" value="UREASE ACCESSORY PROTEIN D"/>
    <property type="match status" value="1"/>
</dbReference>
<dbReference type="PANTHER" id="PTHR33643:SF1">
    <property type="entry name" value="UREASE ACCESSORY PROTEIN D"/>
    <property type="match status" value="1"/>
</dbReference>
<dbReference type="Pfam" id="PF01774">
    <property type="entry name" value="UreD"/>
    <property type="match status" value="1"/>
</dbReference>
<organism>
    <name type="scientific">Rhizobium rhizogenes (strain K84 / ATCC BAA-868)</name>
    <name type="common">Agrobacterium radiobacter</name>
    <dbReference type="NCBI Taxonomy" id="311403"/>
    <lineage>
        <taxon>Bacteria</taxon>
        <taxon>Pseudomonadati</taxon>
        <taxon>Pseudomonadota</taxon>
        <taxon>Alphaproteobacteria</taxon>
        <taxon>Hyphomicrobiales</taxon>
        <taxon>Rhizobiaceae</taxon>
        <taxon>Rhizobium/Agrobacterium group</taxon>
        <taxon>Rhizobium</taxon>
    </lineage>
</organism>
<evidence type="ECO:0000255" key="1">
    <source>
        <dbReference type="HAMAP-Rule" id="MF_01384"/>
    </source>
</evidence>
<gene>
    <name evidence="1" type="primary">ureD</name>
    <name type="ordered locus">Arad_3474</name>
</gene>